<evidence type="ECO:0000255" key="1">
    <source>
        <dbReference type="HAMAP-Rule" id="MF_04027"/>
    </source>
</evidence>
<evidence type="ECO:0000256" key="2">
    <source>
        <dbReference type="SAM" id="MobiDB-lite"/>
    </source>
</evidence>
<evidence type="ECO:0000269" key="3">
    <source>
    </source>
</evidence>
<name>RIR1_HCMVA</name>
<comment type="function">
    <text evidence="1 3">Does not possess a ribonucleotide reductase activity. Betaherpesviruses probably use another strategy to expand the dNTP pool in a quiescent host cell.</text>
</comment>
<comment type="subcellular location">
    <subcellularLocation>
        <location evidence="1 3">Virion</location>
    </subcellularLocation>
    <subcellularLocation>
        <location evidence="1">Host cytoplasm</location>
    </subcellularLocation>
</comment>
<comment type="similarity">
    <text evidence="1">Belongs to the ribonucleoside diphosphate reductase large chain family.</text>
</comment>
<comment type="caution">
    <text evidence="1">Lacks the conserved sequence Asn-x-Cys-x-Glu essential for ribonucleotide reductase activity.</text>
</comment>
<proteinExistence type="inferred from homology"/>
<organism>
    <name type="scientific">Human cytomegalovirus (strain AD169)</name>
    <name type="common">HHV-5</name>
    <name type="synonym">Human herpesvirus 5</name>
    <dbReference type="NCBI Taxonomy" id="10360"/>
    <lineage>
        <taxon>Viruses</taxon>
        <taxon>Duplodnaviria</taxon>
        <taxon>Heunggongvirae</taxon>
        <taxon>Peploviricota</taxon>
        <taxon>Herviviricetes</taxon>
        <taxon>Herpesvirales</taxon>
        <taxon>Orthoherpesviridae</taxon>
        <taxon>Betaherpesvirinae</taxon>
        <taxon>Cytomegalovirus</taxon>
        <taxon>Cytomegalovirus humanbeta5</taxon>
        <taxon>Human cytomegalovirus</taxon>
    </lineage>
</organism>
<feature type="chain" id="PRO_0000187235" description="Ribonucleoside-diphosphate reductase large subunit-like protein">
    <location>
        <begin position="1"/>
        <end position="906"/>
    </location>
</feature>
<feature type="region of interest" description="Disordered" evidence="2">
    <location>
        <begin position="1"/>
        <end position="70"/>
    </location>
</feature>
<feature type="region of interest" description="Disordered" evidence="2">
    <location>
        <begin position="89"/>
        <end position="129"/>
    </location>
</feature>
<feature type="compositionally biased region" description="Polar residues" evidence="2">
    <location>
        <begin position="98"/>
        <end position="109"/>
    </location>
</feature>
<dbReference type="EMBL" id="X17403">
    <property type="protein sequence ID" value="CAA35404.1"/>
    <property type="molecule type" value="Genomic_DNA"/>
</dbReference>
<dbReference type="EMBL" id="BK000394">
    <property type="protein sequence ID" value="DAA00148.1"/>
    <property type="molecule type" value="Genomic_DNA"/>
</dbReference>
<dbReference type="PIR" id="S09808">
    <property type="entry name" value="WMBEV3"/>
</dbReference>
<dbReference type="SMR" id="P16782"/>
<dbReference type="Proteomes" id="UP000008991">
    <property type="component" value="Segment"/>
</dbReference>
<dbReference type="Proteomes" id="UP000008992">
    <property type="component" value="Segment"/>
</dbReference>
<dbReference type="GO" id="GO:0030430">
    <property type="term" value="C:host cell cytoplasm"/>
    <property type="evidence" value="ECO:0007669"/>
    <property type="project" value="UniProtKB-SubCell"/>
</dbReference>
<dbReference type="GO" id="GO:0044423">
    <property type="term" value="C:virion component"/>
    <property type="evidence" value="ECO:0007669"/>
    <property type="project" value="UniProtKB-UniRule"/>
</dbReference>
<dbReference type="GO" id="GO:0005524">
    <property type="term" value="F:ATP binding"/>
    <property type="evidence" value="ECO:0007669"/>
    <property type="project" value="TreeGrafter"/>
</dbReference>
<dbReference type="GO" id="GO:0004748">
    <property type="term" value="F:ribonucleoside-diphosphate reductase activity, thioredoxin disulfide as acceptor"/>
    <property type="evidence" value="ECO:0007669"/>
    <property type="project" value="TreeGrafter"/>
</dbReference>
<dbReference type="GO" id="GO:0009263">
    <property type="term" value="P:deoxyribonucleotide biosynthetic process"/>
    <property type="evidence" value="ECO:0007669"/>
    <property type="project" value="TreeGrafter"/>
</dbReference>
<dbReference type="Gene3D" id="3.20.70.20">
    <property type="match status" value="1"/>
</dbReference>
<dbReference type="HAMAP" id="MF_04027">
    <property type="entry name" value="HSV_RIR1_betahv"/>
    <property type="match status" value="1"/>
</dbReference>
<dbReference type="InterPro" id="IPR034716">
    <property type="entry name" value="HSV_RIR1_betahv"/>
</dbReference>
<dbReference type="InterPro" id="IPR013346">
    <property type="entry name" value="NrdE_NrdA_C"/>
</dbReference>
<dbReference type="InterPro" id="IPR000788">
    <property type="entry name" value="RNR_lg_C"/>
</dbReference>
<dbReference type="InterPro" id="IPR039718">
    <property type="entry name" value="Rrm1"/>
</dbReference>
<dbReference type="PANTHER" id="PTHR11573">
    <property type="entry name" value="RIBONUCLEOSIDE-DIPHOSPHATE REDUCTASE LARGE CHAIN"/>
    <property type="match status" value="1"/>
</dbReference>
<dbReference type="PANTHER" id="PTHR11573:SF6">
    <property type="entry name" value="RIBONUCLEOSIDE-DIPHOSPHATE REDUCTASE LARGE SUBUNIT"/>
    <property type="match status" value="1"/>
</dbReference>
<dbReference type="Pfam" id="PF02867">
    <property type="entry name" value="Ribonuc_red_lgC"/>
    <property type="match status" value="1"/>
</dbReference>
<dbReference type="PRINTS" id="PR01183">
    <property type="entry name" value="RIBORDTASEM1"/>
</dbReference>
<dbReference type="SUPFAM" id="SSF51998">
    <property type="entry name" value="PFL-like glycyl radical enzymes"/>
    <property type="match status" value="1"/>
</dbReference>
<dbReference type="PROSITE" id="PS00089">
    <property type="entry name" value="RIBORED_LARGE"/>
    <property type="match status" value="1"/>
</dbReference>
<protein>
    <recommendedName>
        <fullName evidence="1">Ribonucleoside-diphosphate reductase large subunit-like protein</fullName>
    </recommendedName>
</protein>
<gene>
    <name evidence="1" type="primary">RIR1</name>
    <name type="synonym">UL45</name>
</gene>
<accession>P16782</accession>
<accession>Q7M6P0</accession>
<reference key="1">
    <citation type="journal article" date="1990" name="Curr. Top. Microbiol. Immunol.">
        <title>Analysis of the protein-coding content of the sequence of human cytomegalovirus strain AD169.</title>
        <authorList>
            <person name="Chee M.S."/>
            <person name="Bankier A.T."/>
            <person name="Beck S."/>
            <person name="Bohni R."/>
            <person name="Brown C.M."/>
            <person name="Cerny R."/>
            <person name="Horsnell T."/>
            <person name="Hutchison C.A. III"/>
            <person name="Kouzarides T."/>
            <person name="Martignetti J.A."/>
            <person name="Preddie E."/>
            <person name="Satchwell S.C."/>
            <person name="Tomlinson P."/>
            <person name="Weston K.M."/>
            <person name="Barrell B.G."/>
        </authorList>
    </citation>
    <scope>NUCLEOTIDE SEQUENCE [GENOMIC DNA]</scope>
</reference>
<reference key="2">
    <citation type="journal article" date="2003" name="J. Gen. Virol.">
        <title>The human cytomegalovirus genome revisited: comparison with the chimpanzee cytomegalovirus genome.</title>
        <authorList>
            <person name="Davison A.J."/>
            <person name="Dolan A."/>
            <person name="Akter P."/>
            <person name="Addison C."/>
            <person name="Dargan D.J."/>
            <person name="Alcendor D.J."/>
            <person name="McGeoch D.J."/>
            <person name="Hayward G.S."/>
        </authorList>
    </citation>
    <scope>GENOME REANNOTATION</scope>
</reference>
<reference key="3">
    <citation type="journal article" date="2003" name="J. Gen. Virol.">
        <authorList>
            <person name="Davison A.J."/>
            <person name="Dolan A."/>
            <person name="Akter P."/>
            <person name="Addison C."/>
            <person name="Dargan D.J."/>
            <person name="Alcendor D.J."/>
            <person name="McGeoch D.J."/>
            <person name="Hayward G.S."/>
        </authorList>
    </citation>
    <scope>ERRATUM OF PUBMED:12533697</scope>
</reference>
<reference key="4">
    <citation type="journal article" date="2003" name="J. Gen. Virol.">
        <title>The human cytomegalovirus UL45 gene product is a late, virion-associated protein and influences virus growth at low multiplicities of infection.</title>
        <authorList>
            <person name="Patrone M."/>
            <person name="Percivalle E."/>
            <person name="Secchi M."/>
            <person name="Fiorina L."/>
            <person name="Pedrali-Noy G."/>
            <person name="Zoppe M."/>
            <person name="Baldanti F."/>
            <person name="Hahn G."/>
            <person name="Koszinowski U.H."/>
            <person name="Milanesi G."/>
            <person name="Gallina A."/>
        </authorList>
    </citation>
    <scope>FUNCTION</scope>
    <scope>SUBCELLULAR LOCATION</scope>
    <scope>PROBABLE ABSENCE OF RIBONUCLEOTIDE REDUCTASE ACTIVITY</scope>
</reference>
<reference key="5">
    <citation type="journal article" date="2004" name="J. Virol.">
        <title>Identification of proteins in human cytomegalovirus (HCMV) particles: the HCMV proteome.</title>
        <authorList>
            <person name="Varnum S.M."/>
            <person name="Streblow D.N."/>
            <person name="Monroe M.E."/>
            <person name="Smith P."/>
            <person name="Auberry K.J."/>
            <person name="Pasa-Tolic L."/>
            <person name="Wang D."/>
            <person name="Camp D.G. II"/>
            <person name="Rodland K."/>
            <person name="Wiley S."/>
            <person name="Britt W."/>
            <person name="Shenk T."/>
            <person name="Smith R.D."/>
            <person name="Nelson J.A."/>
        </authorList>
    </citation>
    <scope>IDENTIFICATION</scope>
</reference>
<reference key="6">
    <citation type="journal article" date="2004" name="J. Virol.">
        <authorList>
            <person name="Varnum S.M."/>
            <person name="Streblow D.N."/>
            <person name="Monroe M.E."/>
            <person name="Smith P."/>
            <person name="Auberry K.J."/>
            <person name="Pasa-Tolic L."/>
            <person name="Wang D."/>
            <person name="Camp D.G. II"/>
            <person name="Rodland K."/>
            <person name="Wiley S."/>
            <person name="Britt W."/>
            <person name="Shenk T."/>
            <person name="Smith R.D."/>
            <person name="Nelson J.A."/>
        </authorList>
    </citation>
    <scope>ERRATUM OF PUBMED:15452216</scope>
</reference>
<reference key="7">
    <citation type="journal article" date="2009" name="Trends Biochem. Sci.">
        <title>Tinkering with a viral ribonucleotide reductase.</title>
        <authorList>
            <person name="Lembo D."/>
            <person name="Brune W."/>
        </authorList>
    </citation>
    <scope>REVIEW</scope>
</reference>
<keyword id="KW-1035">Host cytoplasm</keyword>
<keyword id="KW-0426">Late protein</keyword>
<keyword id="KW-1185">Reference proteome</keyword>
<keyword id="KW-0946">Virion</keyword>
<sequence length="906" mass="101668">MNPADADEEQRVSSVPAHRCRPGRIPSRSAETETEESSAEVAADTIGGDDSELEEGPLPGGDKEASAGNTNVSSGVACVAGFTSGGGVVSWRPESPSPDGTPSVLSLTRDSGPAVPSRGGRVSSGLSTFNPAGATRMELDSVEEEDDFGASLCKVSPPIQATRMLMGKKCHCHGYWGKFRFCGVQEPARELPSDRNALWREMDTVSRHSAGLGSFRLFQLIMRHGPCLIRHSPRCDLLLGRFYFKANWARESRTPLCYASELCDESVRRFVLRHMEDLPKLAEETARFVELAGCWGLYAAILCLDKVCRQLHGQDESPGGVFLRIAVALTAAIENSRHSRIYRFHLDARFEGEVLESVLKRCRDGQLSLSTFTMSTVGFDRVPQYDFLISADPFSRDASWAAMCKWMSTLSCGVSVSVNVTRLNADVNSVIRCLGGYCDLIREKEVHRPVVRVFVDMWDVAAIRVINFILKESTSELTGVCYAFNVPSVLMKRYRAREQRYSLFGRPVSRRLSDLGQESAFEKEYSRCEQSCPKVVVNTDDFLKKMLLCALKGRASVVFVHHVVKYSIMADSVCLPPCLSPDMASCHFGECDMPVQRLTVNVARCVFARSDEQKLHLPDVVLGNTRRYFDLSVLRELVTEAVVWGNARLDALMSASEWWVESALEKLRPLHIGVAGLHTALMRLGFTYFASWDLIERIFEHMYFAAVRASVDLCKSGLPRCEWFERTIYQEGKFIFELYRLPRLSIASARWEALRADMLEFGLRNCQFLAVGPDDEVAHLWGVTPSVWASRGTVFEEETVWSLCPPNRECYFPTVVRRPLRVPVVNYAWLEQHQEEGKATQCLFQAAPAIQNDVEMAAVNLSVFVDQCVALVFYYDSGMTPDVLLARMLKWYHWRFKVGVYKYCAS</sequence>
<organismHost>
    <name type="scientific">Homo sapiens</name>
    <name type="common">Human</name>
    <dbReference type="NCBI Taxonomy" id="9606"/>
</organismHost>